<dbReference type="EC" id="3.6.1.9" evidence="1"/>
<dbReference type="EMBL" id="CP000240">
    <property type="protein sequence ID" value="ABD01692.1"/>
    <property type="molecule type" value="Genomic_DNA"/>
</dbReference>
<dbReference type="RefSeq" id="WP_011432350.1">
    <property type="nucleotide sequence ID" value="NC_007776.1"/>
</dbReference>
<dbReference type="SMR" id="Q2JNH4"/>
<dbReference type="STRING" id="321332.CYB_0709"/>
<dbReference type="KEGG" id="cyb:CYB_0709"/>
<dbReference type="eggNOG" id="COG0424">
    <property type="taxonomic scope" value="Bacteria"/>
</dbReference>
<dbReference type="HOGENOM" id="CLU_040416_1_2_3"/>
<dbReference type="OrthoDB" id="9807767at2"/>
<dbReference type="Proteomes" id="UP000001938">
    <property type="component" value="Chromosome"/>
</dbReference>
<dbReference type="GO" id="GO:0005737">
    <property type="term" value="C:cytoplasm"/>
    <property type="evidence" value="ECO:0007669"/>
    <property type="project" value="UniProtKB-SubCell"/>
</dbReference>
<dbReference type="GO" id="GO:0047429">
    <property type="term" value="F:nucleoside triphosphate diphosphatase activity"/>
    <property type="evidence" value="ECO:0007669"/>
    <property type="project" value="UniProtKB-EC"/>
</dbReference>
<dbReference type="GO" id="GO:0009117">
    <property type="term" value="P:nucleotide metabolic process"/>
    <property type="evidence" value="ECO:0007669"/>
    <property type="project" value="UniProtKB-KW"/>
</dbReference>
<dbReference type="CDD" id="cd00555">
    <property type="entry name" value="Maf"/>
    <property type="match status" value="1"/>
</dbReference>
<dbReference type="Gene3D" id="3.90.950.10">
    <property type="match status" value="1"/>
</dbReference>
<dbReference type="HAMAP" id="MF_00528">
    <property type="entry name" value="Maf"/>
    <property type="match status" value="1"/>
</dbReference>
<dbReference type="InterPro" id="IPR029001">
    <property type="entry name" value="ITPase-like_fam"/>
</dbReference>
<dbReference type="InterPro" id="IPR003697">
    <property type="entry name" value="Maf-like"/>
</dbReference>
<dbReference type="NCBIfam" id="TIGR00172">
    <property type="entry name" value="maf"/>
    <property type="match status" value="1"/>
</dbReference>
<dbReference type="PANTHER" id="PTHR43213">
    <property type="entry name" value="BIFUNCTIONAL DTTP/UTP PYROPHOSPHATASE/METHYLTRANSFERASE PROTEIN-RELATED"/>
    <property type="match status" value="1"/>
</dbReference>
<dbReference type="PANTHER" id="PTHR43213:SF5">
    <property type="entry name" value="BIFUNCTIONAL DTTP_UTP PYROPHOSPHATASE_METHYLTRANSFERASE PROTEIN-RELATED"/>
    <property type="match status" value="1"/>
</dbReference>
<dbReference type="Pfam" id="PF02545">
    <property type="entry name" value="Maf"/>
    <property type="match status" value="1"/>
</dbReference>
<dbReference type="PIRSF" id="PIRSF006305">
    <property type="entry name" value="Maf"/>
    <property type="match status" value="1"/>
</dbReference>
<dbReference type="SUPFAM" id="SSF52972">
    <property type="entry name" value="ITPase-like"/>
    <property type="match status" value="1"/>
</dbReference>
<feature type="chain" id="PRO_0000267448" description="Nucleoside triphosphate pyrophosphatase">
    <location>
        <begin position="1"/>
        <end position="197"/>
    </location>
</feature>
<feature type="active site" description="Proton acceptor" evidence="1">
    <location>
        <position position="71"/>
    </location>
</feature>
<gene>
    <name type="ordered locus">CYB_0709</name>
</gene>
<comment type="function">
    <text evidence="1">Nucleoside triphosphate pyrophosphatase. May have a dual role in cell division arrest and in preventing the incorporation of modified nucleotides into cellular nucleic acids.</text>
</comment>
<comment type="catalytic activity">
    <reaction evidence="1">
        <text>a ribonucleoside 5'-triphosphate + H2O = a ribonucleoside 5'-phosphate + diphosphate + H(+)</text>
        <dbReference type="Rhea" id="RHEA:23996"/>
        <dbReference type="ChEBI" id="CHEBI:15377"/>
        <dbReference type="ChEBI" id="CHEBI:15378"/>
        <dbReference type="ChEBI" id="CHEBI:33019"/>
        <dbReference type="ChEBI" id="CHEBI:58043"/>
        <dbReference type="ChEBI" id="CHEBI:61557"/>
        <dbReference type="EC" id="3.6.1.9"/>
    </reaction>
</comment>
<comment type="catalytic activity">
    <reaction evidence="1">
        <text>a 2'-deoxyribonucleoside 5'-triphosphate + H2O = a 2'-deoxyribonucleoside 5'-phosphate + diphosphate + H(+)</text>
        <dbReference type="Rhea" id="RHEA:44644"/>
        <dbReference type="ChEBI" id="CHEBI:15377"/>
        <dbReference type="ChEBI" id="CHEBI:15378"/>
        <dbReference type="ChEBI" id="CHEBI:33019"/>
        <dbReference type="ChEBI" id="CHEBI:61560"/>
        <dbReference type="ChEBI" id="CHEBI:65317"/>
        <dbReference type="EC" id="3.6.1.9"/>
    </reaction>
</comment>
<comment type="cofactor">
    <cofactor evidence="1">
        <name>a divalent metal cation</name>
        <dbReference type="ChEBI" id="CHEBI:60240"/>
    </cofactor>
</comment>
<comment type="subcellular location">
    <subcellularLocation>
        <location evidence="1">Cytoplasm</location>
    </subcellularLocation>
</comment>
<comment type="similarity">
    <text evidence="1">Belongs to the Maf family.</text>
</comment>
<sequence length="197" mass="21652">MLPPIVLASQSPARRQLLKAAGIPFRVQPSYFDESQIKSSDPVELVQKLASAKAEVVAAQQREPVLVVGADSVLYLDGEILGKPPNALEAERRLRQMRGEVGELYTGHALIDTKQNRRLTHYAVTRVFFAKPSDEEIRAYVATGEPLNCAGCFAIDGRGSLFVERIEGCPGNVIGLSLPLLRRMMQELGYSLTDAWS</sequence>
<keyword id="KW-0963">Cytoplasm</keyword>
<keyword id="KW-0378">Hydrolase</keyword>
<keyword id="KW-0546">Nucleotide metabolism</keyword>
<keyword id="KW-1185">Reference proteome</keyword>
<proteinExistence type="inferred from homology"/>
<organism>
    <name type="scientific">Synechococcus sp. (strain JA-2-3B'a(2-13))</name>
    <name type="common">Cyanobacteria bacterium Yellowstone B-Prime</name>
    <dbReference type="NCBI Taxonomy" id="321332"/>
    <lineage>
        <taxon>Bacteria</taxon>
        <taxon>Bacillati</taxon>
        <taxon>Cyanobacteriota</taxon>
        <taxon>Cyanophyceae</taxon>
        <taxon>Synechococcales</taxon>
        <taxon>Synechococcaceae</taxon>
        <taxon>Synechococcus</taxon>
    </lineage>
</organism>
<protein>
    <recommendedName>
        <fullName evidence="1">Nucleoside triphosphate pyrophosphatase</fullName>
        <ecNumber evidence="1">3.6.1.9</ecNumber>
    </recommendedName>
    <alternativeName>
        <fullName evidence="1">Nucleotide pyrophosphatase</fullName>
        <shortName evidence="1">Nucleotide PPase</shortName>
    </alternativeName>
</protein>
<name>NTPP_SYNJB</name>
<evidence type="ECO:0000255" key="1">
    <source>
        <dbReference type="HAMAP-Rule" id="MF_00528"/>
    </source>
</evidence>
<reference key="1">
    <citation type="journal article" date="2007" name="ISME J.">
        <title>Population level functional diversity in a microbial community revealed by comparative genomic and metagenomic analyses.</title>
        <authorList>
            <person name="Bhaya D."/>
            <person name="Grossman A.R."/>
            <person name="Steunou A.-S."/>
            <person name="Khuri N."/>
            <person name="Cohan F.M."/>
            <person name="Hamamura N."/>
            <person name="Melendrez M.C."/>
            <person name="Bateson M.M."/>
            <person name="Ward D.M."/>
            <person name="Heidelberg J.F."/>
        </authorList>
    </citation>
    <scope>NUCLEOTIDE SEQUENCE [LARGE SCALE GENOMIC DNA]</scope>
    <source>
        <strain>JA-2-3B'a(2-13)</strain>
    </source>
</reference>
<accession>Q2JNH4</accession>